<feature type="chain" id="PRO_0000282387" description="ADP-ribosylation factor-like protein 15">
    <location>
        <begin position="1"/>
        <end position="204"/>
    </location>
</feature>
<feature type="binding site" evidence="1">
    <location>
        <begin position="39"/>
        <end position="46"/>
    </location>
    <ligand>
        <name>GTP</name>
        <dbReference type="ChEBI" id="CHEBI:37565"/>
    </ligand>
</feature>
<feature type="binding site" evidence="1">
    <location>
        <begin position="82"/>
        <end position="86"/>
    </location>
    <ligand>
        <name>GTP</name>
        <dbReference type="ChEBI" id="CHEBI:37565"/>
    </ligand>
</feature>
<feature type="binding site" evidence="1">
    <location>
        <begin position="142"/>
        <end position="145"/>
    </location>
    <ligand>
        <name>GTP</name>
        <dbReference type="ChEBI" id="CHEBI:37565"/>
    </ligand>
</feature>
<feature type="sequence conflict" description="In Ref. 2; CAG33506." evidence="2" ref="2">
    <original>M</original>
    <variation>I</variation>
    <location>
        <position position="204"/>
    </location>
</feature>
<feature type="strand" evidence="3">
    <location>
        <begin position="34"/>
        <end position="41"/>
    </location>
</feature>
<feature type="helix" evidence="3">
    <location>
        <begin position="42"/>
        <end position="52"/>
    </location>
</feature>
<feature type="strand" evidence="3">
    <location>
        <begin position="79"/>
        <end position="82"/>
    </location>
</feature>
<feature type="helix" evidence="3">
    <location>
        <begin position="87"/>
        <end position="92"/>
    </location>
</feature>
<feature type="helix" evidence="3">
    <location>
        <begin position="93"/>
        <end position="95"/>
    </location>
</feature>
<feature type="strand" evidence="3">
    <location>
        <begin position="101"/>
        <end position="106"/>
    </location>
</feature>
<feature type="helix" evidence="3">
    <location>
        <begin position="113"/>
        <end position="127"/>
    </location>
</feature>
<feature type="helix" evidence="3">
    <location>
        <begin position="130"/>
        <end position="133"/>
    </location>
</feature>
<feature type="strand" evidence="3">
    <location>
        <begin position="137"/>
        <end position="141"/>
    </location>
</feature>
<feature type="helix" evidence="3">
    <location>
        <begin position="152"/>
        <end position="158"/>
    </location>
</feature>
<feature type="turn" evidence="3">
    <location>
        <begin position="159"/>
        <end position="163"/>
    </location>
</feature>
<feature type="strand" evidence="3">
    <location>
        <begin position="167"/>
        <end position="172"/>
    </location>
</feature>
<feature type="helix" evidence="3">
    <location>
        <begin position="180"/>
        <end position="194"/>
    </location>
</feature>
<keyword id="KW-0002">3D-structure</keyword>
<keyword id="KW-0342">GTP-binding</keyword>
<keyword id="KW-0547">Nucleotide-binding</keyword>
<keyword id="KW-1267">Proteomics identification</keyword>
<keyword id="KW-1185">Reference proteome</keyword>
<protein>
    <recommendedName>
        <fullName>ADP-ribosylation factor-like protein 15</fullName>
    </recommendedName>
    <alternativeName>
        <fullName>ADP-ribosylation factor-related protein 2</fullName>
        <shortName>ARF-related protein 2</shortName>
    </alternativeName>
</protein>
<dbReference type="EMBL" id="AK000058">
    <property type="protein sequence ID" value="BAA90915.1"/>
    <property type="molecule type" value="mRNA"/>
</dbReference>
<dbReference type="EMBL" id="CR457225">
    <property type="protein sequence ID" value="CAG33506.1"/>
    <property type="molecule type" value="mRNA"/>
</dbReference>
<dbReference type="EMBL" id="BC026093">
    <property type="protein sequence ID" value="AAH26093.1"/>
    <property type="molecule type" value="mRNA"/>
</dbReference>
<dbReference type="CCDS" id="CCDS54850.1"/>
<dbReference type="RefSeq" id="NP_061960.1">
    <property type="nucleotide sequence ID" value="NM_019087.3"/>
</dbReference>
<dbReference type="PDB" id="8F6D">
    <property type="method" value="X-ray"/>
    <property type="resolution" value="3.20 A"/>
    <property type="chains" value="B/D/F/H=32-197"/>
</dbReference>
<dbReference type="PDBsum" id="8F6D"/>
<dbReference type="SASBDB" id="Q9NXU5"/>
<dbReference type="SMR" id="Q9NXU5"/>
<dbReference type="BioGRID" id="120080">
    <property type="interactions" value="114"/>
</dbReference>
<dbReference type="FunCoup" id="Q9NXU5">
    <property type="interactions" value="170"/>
</dbReference>
<dbReference type="IntAct" id="Q9NXU5">
    <property type="interactions" value="47"/>
</dbReference>
<dbReference type="MINT" id="Q9NXU5"/>
<dbReference type="STRING" id="9606.ENSP00000433427"/>
<dbReference type="iPTMnet" id="Q9NXU5"/>
<dbReference type="PhosphoSitePlus" id="Q9NXU5"/>
<dbReference type="SwissPalm" id="Q9NXU5"/>
<dbReference type="BioMuta" id="ARL15"/>
<dbReference type="DMDM" id="74734700"/>
<dbReference type="jPOST" id="Q9NXU5"/>
<dbReference type="MassIVE" id="Q9NXU5"/>
<dbReference type="PaxDb" id="9606-ENSP00000433427"/>
<dbReference type="PeptideAtlas" id="Q9NXU5"/>
<dbReference type="ProteomicsDB" id="83136"/>
<dbReference type="Pumba" id="Q9NXU5"/>
<dbReference type="Antibodypedia" id="51587">
    <property type="antibodies" value="125 antibodies from 30 providers"/>
</dbReference>
<dbReference type="DNASU" id="54622"/>
<dbReference type="Ensembl" id="ENST00000504924.6">
    <property type="protein sequence ID" value="ENSP00000433427.1"/>
    <property type="gene ID" value="ENSG00000185305.12"/>
</dbReference>
<dbReference type="GeneID" id="54622"/>
<dbReference type="KEGG" id="hsa:54622"/>
<dbReference type="MANE-Select" id="ENST00000504924.6">
    <property type="protein sequence ID" value="ENSP00000433427.1"/>
    <property type="RefSeq nucleotide sequence ID" value="NM_019087.3"/>
    <property type="RefSeq protein sequence ID" value="NP_061960.1"/>
</dbReference>
<dbReference type="UCSC" id="uc003jpg.1">
    <property type="organism name" value="human"/>
</dbReference>
<dbReference type="AGR" id="HGNC:25945"/>
<dbReference type="CTD" id="54622"/>
<dbReference type="DisGeNET" id="54622"/>
<dbReference type="GeneCards" id="ARL15"/>
<dbReference type="HGNC" id="HGNC:25945">
    <property type="gene designation" value="ARL15"/>
</dbReference>
<dbReference type="HPA" id="ENSG00000185305">
    <property type="expression patterns" value="Low tissue specificity"/>
</dbReference>
<dbReference type="MalaCards" id="ARL15"/>
<dbReference type="neXtProt" id="NX_Q9NXU5"/>
<dbReference type="OpenTargets" id="ENSG00000185305"/>
<dbReference type="PharmGKB" id="PA134960964"/>
<dbReference type="VEuPathDB" id="HostDB:ENSG00000185305"/>
<dbReference type="eggNOG" id="KOG0071">
    <property type="taxonomic scope" value="Eukaryota"/>
</dbReference>
<dbReference type="GeneTree" id="ENSGT00940000156244"/>
<dbReference type="InParanoid" id="Q9NXU5"/>
<dbReference type="OrthoDB" id="414781at2759"/>
<dbReference type="PAN-GO" id="Q9NXU5">
    <property type="GO annotations" value="0 GO annotations based on evolutionary models"/>
</dbReference>
<dbReference type="PhylomeDB" id="Q9NXU5"/>
<dbReference type="TreeFam" id="TF329693"/>
<dbReference type="PathwayCommons" id="Q9NXU5"/>
<dbReference type="SignaLink" id="Q9NXU5"/>
<dbReference type="BioGRID-ORCS" id="54622">
    <property type="hits" value="22 hits in 1164 CRISPR screens"/>
</dbReference>
<dbReference type="ChiTaRS" id="ARL15">
    <property type="organism name" value="human"/>
</dbReference>
<dbReference type="GenomeRNAi" id="54622"/>
<dbReference type="Pharos" id="Q9NXU5">
    <property type="development level" value="Tbio"/>
</dbReference>
<dbReference type="PRO" id="PR:Q9NXU5"/>
<dbReference type="Proteomes" id="UP000005640">
    <property type="component" value="Chromosome 5"/>
</dbReference>
<dbReference type="RNAct" id="Q9NXU5">
    <property type="molecule type" value="protein"/>
</dbReference>
<dbReference type="Bgee" id="ENSG00000185305">
    <property type="expression patterns" value="Expressed in endothelial cell and 180 other cell types or tissues"/>
</dbReference>
<dbReference type="ExpressionAtlas" id="Q9NXU5">
    <property type="expression patterns" value="baseline and differential"/>
</dbReference>
<dbReference type="GO" id="GO:0070062">
    <property type="term" value="C:extracellular exosome"/>
    <property type="evidence" value="ECO:0007005"/>
    <property type="project" value="UniProtKB"/>
</dbReference>
<dbReference type="GO" id="GO:0005525">
    <property type="term" value="F:GTP binding"/>
    <property type="evidence" value="ECO:0007669"/>
    <property type="project" value="UniProtKB-KW"/>
</dbReference>
<dbReference type="GO" id="GO:0003924">
    <property type="term" value="F:GTPase activity"/>
    <property type="evidence" value="ECO:0007669"/>
    <property type="project" value="InterPro"/>
</dbReference>
<dbReference type="FunFam" id="3.40.50.300:FF:000934">
    <property type="entry name" value="ADP-ribosylation factor-like 15 isoform X1"/>
    <property type="match status" value="1"/>
</dbReference>
<dbReference type="Gene3D" id="3.40.50.300">
    <property type="entry name" value="P-loop containing nucleotide triphosphate hydrolases"/>
    <property type="match status" value="1"/>
</dbReference>
<dbReference type="InterPro" id="IPR042292">
    <property type="entry name" value="ARL15"/>
</dbReference>
<dbReference type="InterPro" id="IPR027417">
    <property type="entry name" value="P-loop_NTPase"/>
</dbReference>
<dbReference type="InterPro" id="IPR006689">
    <property type="entry name" value="Small_GTPase_ARF/SAR"/>
</dbReference>
<dbReference type="PANTHER" id="PTHR46693">
    <property type="entry name" value="ADP-RIBOSYLATION FACTOR-LIKE PROTEIN 15"/>
    <property type="match status" value="1"/>
</dbReference>
<dbReference type="PANTHER" id="PTHR46693:SF1">
    <property type="entry name" value="ADP-RIBOSYLATION FACTOR-LIKE PROTEIN 15"/>
    <property type="match status" value="1"/>
</dbReference>
<dbReference type="Pfam" id="PF00025">
    <property type="entry name" value="Arf"/>
    <property type="match status" value="1"/>
</dbReference>
<dbReference type="PRINTS" id="PR00328">
    <property type="entry name" value="SAR1GTPBP"/>
</dbReference>
<dbReference type="SMART" id="SM00177">
    <property type="entry name" value="ARF"/>
    <property type="match status" value="1"/>
</dbReference>
<dbReference type="SMART" id="SM00178">
    <property type="entry name" value="SAR"/>
    <property type="match status" value="1"/>
</dbReference>
<dbReference type="SUPFAM" id="SSF52540">
    <property type="entry name" value="P-loop containing nucleoside triphosphate hydrolases"/>
    <property type="match status" value="1"/>
</dbReference>
<dbReference type="PROSITE" id="PS51417">
    <property type="entry name" value="ARF"/>
    <property type="match status" value="1"/>
</dbReference>
<organism>
    <name type="scientific">Homo sapiens</name>
    <name type="common">Human</name>
    <dbReference type="NCBI Taxonomy" id="9606"/>
    <lineage>
        <taxon>Eukaryota</taxon>
        <taxon>Metazoa</taxon>
        <taxon>Chordata</taxon>
        <taxon>Craniata</taxon>
        <taxon>Vertebrata</taxon>
        <taxon>Euteleostomi</taxon>
        <taxon>Mammalia</taxon>
        <taxon>Eutheria</taxon>
        <taxon>Euarchontoglires</taxon>
        <taxon>Primates</taxon>
        <taxon>Haplorrhini</taxon>
        <taxon>Catarrhini</taxon>
        <taxon>Hominidae</taxon>
        <taxon>Homo</taxon>
    </lineage>
</organism>
<evidence type="ECO:0000250" key="1"/>
<evidence type="ECO:0000305" key="2"/>
<evidence type="ECO:0007829" key="3">
    <source>
        <dbReference type="PDB" id="8F6D"/>
    </source>
</evidence>
<reference key="1">
    <citation type="journal article" date="2004" name="Nat. Genet.">
        <title>Complete sequencing and characterization of 21,243 full-length human cDNAs.</title>
        <authorList>
            <person name="Ota T."/>
            <person name="Suzuki Y."/>
            <person name="Nishikawa T."/>
            <person name="Otsuki T."/>
            <person name="Sugiyama T."/>
            <person name="Irie R."/>
            <person name="Wakamatsu A."/>
            <person name="Hayashi K."/>
            <person name="Sato H."/>
            <person name="Nagai K."/>
            <person name="Kimura K."/>
            <person name="Makita H."/>
            <person name="Sekine M."/>
            <person name="Obayashi M."/>
            <person name="Nishi T."/>
            <person name="Shibahara T."/>
            <person name="Tanaka T."/>
            <person name="Ishii S."/>
            <person name="Yamamoto J."/>
            <person name="Saito K."/>
            <person name="Kawai Y."/>
            <person name="Isono Y."/>
            <person name="Nakamura Y."/>
            <person name="Nagahari K."/>
            <person name="Murakami K."/>
            <person name="Yasuda T."/>
            <person name="Iwayanagi T."/>
            <person name="Wagatsuma M."/>
            <person name="Shiratori A."/>
            <person name="Sudo H."/>
            <person name="Hosoiri T."/>
            <person name="Kaku Y."/>
            <person name="Kodaira H."/>
            <person name="Kondo H."/>
            <person name="Sugawara M."/>
            <person name="Takahashi M."/>
            <person name="Kanda K."/>
            <person name="Yokoi T."/>
            <person name="Furuya T."/>
            <person name="Kikkawa E."/>
            <person name="Omura Y."/>
            <person name="Abe K."/>
            <person name="Kamihara K."/>
            <person name="Katsuta N."/>
            <person name="Sato K."/>
            <person name="Tanikawa M."/>
            <person name="Yamazaki M."/>
            <person name="Ninomiya K."/>
            <person name="Ishibashi T."/>
            <person name="Yamashita H."/>
            <person name="Murakawa K."/>
            <person name="Fujimori K."/>
            <person name="Tanai H."/>
            <person name="Kimata M."/>
            <person name="Watanabe M."/>
            <person name="Hiraoka S."/>
            <person name="Chiba Y."/>
            <person name="Ishida S."/>
            <person name="Ono Y."/>
            <person name="Takiguchi S."/>
            <person name="Watanabe S."/>
            <person name="Yosida M."/>
            <person name="Hotuta T."/>
            <person name="Kusano J."/>
            <person name="Kanehori K."/>
            <person name="Takahashi-Fujii A."/>
            <person name="Hara H."/>
            <person name="Tanase T.-O."/>
            <person name="Nomura Y."/>
            <person name="Togiya S."/>
            <person name="Komai F."/>
            <person name="Hara R."/>
            <person name="Takeuchi K."/>
            <person name="Arita M."/>
            <person name="Imose N."/>
            <person name="Musashino K."/>
            <person name="Yuuki H."/>
            <person name="Oshima A."/>
            <person name="Sasaki N."/>
            <person name="Aotsuka S."/>
            <person name="Yoshikawa Y."/>
            <person name="Matsunawa H."/>
            <person name="Ichihara T."/>
            <person name="Shiohata N."/>
            <person name="Sano S."/>
            <person name="Moriya S."/>
            <person name="Momiyama H."/>
            <person name="Satoh N."/>
            <person name="Takami S."/>
            <person name="Terashima Y."/>
            <person name="Suzuki O."/>
            <person name="Nakagawa S."/>
            <person name="Senoh A."/>
            <person name="Mizoguchi H."/>
            <person name="Goto Y."/>
            <person name="Shimizu F."/>
            <person name="Wakebe H."/>
            <person name="Hishigaki H."/>
            <person name="Watanabe T."/>
            <person name="Sugiyama A."/>
            <person name="Takemoto M."/>
            <person name="Kawakami B."/>
            <person name="Yamazaki M."/>
            <person name="Watanabe K."/>
            <person name="Kumagai A."/>
            <person name="Itakura S."/>
            <person name="Fukuzumi Y."/>
            <person name="Fujimori Y."/>
            <person name="Komiyama M."/>
            <person name="Tashiro H."/>
            <person name="Tanigami A."/>
            <person name="Fujiwara T."/>
            <person name="Ono T."/>
            <person name="Yamada K."/>
            <person name="Fujii Y."/>
            <person name="Ozaki K."/>
            <person name="Hirao M."/>
            <person name="Ohmori Y."/>
            <person name="Kawabata A."/>
            <person name="Hikiji T."/>
            <person name="Kobatake N."/>
            <person name="Inagaki H."/>
            <person name="Ikema Y."/>
            <person name="Okamoto S."/>
            <person name="Okitani R."/>
            <person name="Kawakami T."/>
            <person name="Noguchi S."/>
            <person name="Itoh T."/>
            <person name="Shigeta K."/>
            <person name="Senba T."/>
            <person name="Matsumura K."/>
            <person name="Nakajima Y."/>
            <person name="Mizuno T."/>
            <person name="Morinaga M."/>
            <person name="Sasaki M."/>
            <person name="Togashi T."/>
            <person name="Oyama M."/>
            <person name="Hata H."/>
            <person name="Watanabe M."/>
            <person name="Komatsu T."/>
            <person name="Mizushima-Sugano J."/>
            <person name="Satoh T."/>
            <person name="Shirai Y."/>
            <person name="Takahashi Y."/>
            <person name="Nakagawa K."/>
            <person name="Okumura K."/>
            <person name="Nagase T."/>
            <person name="Nomura N."/>
            <person name="Kikuchi H."/>
            <person name="Masuho Y."/>
            <person name="Yamashita R."/>
            <person name="Nakai K."/>
            <person name="Yada T."/>
            <person name="Nakamura Y."/>
            <person name="Ohara O."/>
            <person name="Isogai T."/>
            <person name="Sugano S."/>
        </authorList>
    </citation>
    <scope>NUCLEOTIDE SEQUENCE [LARGE SCALE MRNA]</scope>
    <source>
        <tissue>Colon</tissue>
    </source>
</reference>
<reference key="2">
    <citation type="submission" date="2004-06" db="EMBL/GenBank/DDBJ databases">
        <title>Cloning of human full open reading frames in Gateway(TM) system entry vector (pDONR201).</title>
        <authorList>
            <person name="Ebert L."/>
            <person name="Schick M."/>
            <person name="Neubert P."/>
            <person name="Schatten R."/>
            <person name="Henze S."/>
            <person name="Korn B."/>
        </authorList>
    </citation>
    <scope>NUCLEOTIDE SEQUENCE [LARGE SCALE MRNA]</scope>
</reference>
<reference key="3">
    <citation type="journal article" date="2004" name="Genome Res.">
        <title>The status, quality, and expansion of the NIH full-length cDNA project: the Mammalian Gene Collection (MGC).</title>
        <authorList>
            <consortium name="The MGC Project Team"/>
        </authorList>
    </citation>
    <scope>NUCLEOTIDE SEQUENCE [LARGE SCALE MRNA]</scope>
    <source>
        <tissue>Testis</tissue>
    </source>
</reference>
<reference key="4">
    <citation type="journal article" date="2011" name="BMC Syst. Biol.">
        <title>Initial characterization of the human central proteome.</title>
        <authorList>
            <person name="Burkard T.R."/>
            <person name="Planyavsky M."/>
            <person name="Kaupe I."/>
            <person name="Breitwieser F.P."/>
            <person name="Buerckstuemmer T."/>
            <person name="Bennett K.L."/>
            <person name="Superti-Furga G."/>
            <person name="Colinge J."/>
        </authorList>
    </citation>
    <scope>IDENTIFICATION BY MASS SPECTROMETRY [LARGE SCALE ANALYSIS]</scope>
</reference>
<comment type="interaction">
    <interactant intactId="EBI-711759">
        <id>Q9NXU5</id>
    </interactant>
    <interactant intactId="EBI-16439278">
        <id>Q6FHY5</id>
        <label>MEOX2</label>
    </interactant>
    <organismsDiffer>false</organismsDiffer>
    <experiments>3</experiments>
</comment>
<comment type="interaction">
    <interactant intactId="EBI-711759">
        <id>Q9NXU5</id>
    </interactant>
    <interactant intactId="EBI-712685">
        <id>O43924</id>
        <label>PDE6D</label>
    </interactant>
    <organismsDiffer>false</organismsDiffer>
    <experiments>4</experiments>
</comment>
<comment type="interaction">
    <interactant intactId="EBI-711759">
        <id>Q9NXU5</id>
    </interactant>
    <interactant intactId="EBI-711260">
        <id>Q13432</id>
        <label>UNC119</label>
    </interactant>
    <organismsDiffer>false</organismsDiffer>
    <experiments>4</experiments>
</comment>
<comment type="similarity">
    <text evidence="2">Belongs to the small GTPase superfamily. Arf family.</text>
</comment>
<gene>
    <name type="primary">ARL15</name>
    <name type="synonym">ARFRP2</name>
</gene>
<proteinExistence type="evidence at protein level"/>
<accession>Q9NXU5</accession>
<accession>Q6IAD0</accession>
<name>ARL15_HUMAN</name>
<sequence>MSDLRITEAFLYMDYLCFRALCCKGPPPARPEYDLVCIGLTGSGKTSLLSKLCSESPDNVVSTTGFSIKAVPFQNAILNVKELGGADNIRKYWSRYYQGSQGVIFVLDSASSEDDLEAARNELHSALQHPQLCTLPFLILANHQDKPAARSVQEIKKYFELEPLARGKRWILQPCSLDDMDALKDSFSQLINLLEEKDHEAVRM</sequence>